<gene>
    <name type="primary">tsf</name>
    <name type="ordered locus">ML1597</name>
    <name type="ORF">MLCB250.64</name>
</gene>
<keyword id="KW-0963">Cytoplasm</keyword>
<keyword id="KW-0251">Elongation factor</keyword>
<keyword id="KW-0648">Protein biosynthesis</keyword>
<keyword id="KW-1185">Reference proteome</keyword>
<proteinExistence type="inferred from homology"/>
<organism>
    <name type="scientific">Mycobacterium leprae (strain TN)</name>
    <dbReference type="NCBI Taxonomy" id="272631"/>
    <lineage>
        <taxon>Bacteria</taxon>
        <taxon>Bacillati</taxon>
        <taxon>Actinomycetota</taxon>
        <taxon>Actinomycetes</taxon>
        <taxon>Mycobacteriales</taxon>
        <taxon>Mycobacteriaceae</taxon>
        <taxon>Mycobacterium</taxon>
    </lineage>
</organism>
<comment type="function">
    <text evidence="1">Associates with the EF-Tu.GDP complex and induces the exchange of GDP to GTP. It remains bound to the aminoacyl-tRNA.EF-Tu.GTP complex up to the GTP hydrolysis stage on the ribosome (By similarity).</text>
</comment>
<comment type="subcellular location">
    <subcellularLocation>
        <location evidence="1">Cytoplasm</location>
    </subcellularLocation>
</comment>
<comment type="similarity">
    <text evidence="2">Belongs to the EF-Ts family.</text>
</comment>
<feature type="chain" id="PRO_0000161153" description="Elongation factor Ts">
    <location>
        <begin position="1"/>
        <end position="276"/>
    </location>
</feature>
<feature type="region of interest" description="Involved in Mg(2+) ion dislocation from EF-Tu" evidence="1">
    <location>
        <begin position="76"/>
        <end position="79"/>
    </location>
</feature>
<sequence>MANFTVADVKRLRALTGAGMLDCKSVLVETDGNFDKAVESLRIKGAKDVGKRAERATAEGLVAAKDGALIELNCETDFVAKNAEFQKLANQIVGVVAAAKIVDVDALKGASVGDKTVEQAIAELAAKIGEKLKLRRAAIFNGTVATYLHKRAADLPPAVGVLVEYGAGTDAANSTAAAHAAALQIAALKARFLSRDDVPEDVLASERRIAEETAKAAGKPEQSLPKIVEGRLNGFFKDSVLLEQPSVFDNKKTVKVLLDEAGVTVTRFVRFEVGQA</sequence>
<evidence type="ECO:0000250" key="1"/>
<evidence type="ECO:0000305" key="2"/>
<dbReference type="EMBL" id="Z97369">
    <property type="protein sequence ID" value="CAB10658.1"/>
    <property type="molecule type" value="Genomic_DNA"/>
</dbReference>
<dbReference type="EMBL" id="AL583922">
    <property type="protein sequence ID" value="CAC30548.1"/>
    <property type="molecule type" value="Genomic_DNA"/>
</dbReference>
<dbReference type="PIR" id="G87108">
    <property type="entry name" value="G87108"/>
</dbReference>
<dbReference type="RefSeq" id="NP_302100.1">
    <property type="nucleotide sequence ID" value="NC_002677.1"/>
</dbReference>
<dbReference type="RefSeq" id="WP_010908421.1">
    <property type="nucleotide sequence ID" value="NC_002677.1"/>
</dbReference>
<dbReference type="SMR" id="O33039"/>
<dbReference type="STRING" id="272631.gene:17575438"/>
<dbReference type="KEGG" id="mle:ML1597"/>
<dbReference type="PATRIC" id="fig|272631.5.peg.3010"/>
<dbReference type="Leproma" id="ML1597"/>
<dbReference type="eggNOG" id="COG0264">
    <property type="taxonomic scope" value="Bacteria"/>
</dbReference>
<dbReference type="HOGENOM" id="CLU_047155_0_0_11"/>
<dbReference type="OrthoDB" id="9808348at2"/>
<dbReference type="Proteomes" id="UP000000806">
    <property type="component" value="Chromosome"/>
</dbReference>
<dbReference type="GO" id="GO:0005737">
    <property type="term" value="C:cytoplasm"/>
    <property type="evidence" value="ECO:0007669"/>
    <property type="project" value="UniProtKB-SubCell"/>
</dbReference>
<dbReference type="GO" id="GO:0003746">
    <property type="term" value="F:translation elongation factor activity"/>
    <property type="evidence" value="ECO:0007669"/>
    <property type="project" value="UniProtKB-UniRule"/>
</dbReference>
<dbReference type="CDD" id="cd14275">
    <property type="entry name" value="UBA_EF-Ts"/>
    <property type="match status" value="1"/>
</dbReference>
<dbReference type="FunFam" id="1.10.286.20:FF:000001">
    <property type="entry name" value="Elongation factor Ts"/>
    <property type="match status" value="1"/>
</dbReference>
<dbReference type="FunFam" id="1.10.8.10:FF:000001">
    <property type="entry name" value="Elongation factor Ts"/>
    <property type="match status" value="1"/>
</dbReference>
<dbReference type="Gene3D" id="1.10.286.20">
    <property type="match status" value="1"/>
</dbReference>
<dbReference type="Gene3D" id="1.10.8.10">
    <property type="entry name" value="DNA helicase RuvA subunit, C-terminal domain"/>
    <property type="match status" value="1"/>
</dbReference>
<dbReference type="Gene3D" id="3.30.479.20">
    <property type="entry name" value="Elongation factor Ts, dimerisation domain"/>
    <property type="match status" value="2"/>
</dbReference>
<dbReference type="HAMAP" id="MF_00050">
    <property type="entry name" value="EF_Ts"/>
    <property type="match status" value="1"/>
</dbReference>
<dbReference type="InterPro" id="IPR036402">
    <property type="entry name" value="EF-Ts_dimer_sf"/>
</dbReference>
<dbReference type="InterPro" id="IPR001816">
    <property type="entry name" value="Transl_elong_EFTs/EF1B"/>
</dbReference>
<dbReference type="InterPro" id="IPR014039">
    <property type="entry name" value="Transl_elong_EFTs/EF1B_dimer"/>
</dbReference>
<dbReference type="InterPro" id="IPR018101">
    <property type="entry name" value="Transl_elong_Ts_CS"/>
</dbReference>
<dbReference type="InterPro" id="IPR009060">
    <property type="entry name" value="UBA-like_sf"/>
</dbReference>
<dbReference type="NCBIfam" id="TIGR00116">
    <property type="entry name" value="tsf"/>
    <property type="match status" value="1"/>
</dbReference>
<dbReference type="PANTHER" id="PTHR11741">
    <property type="entry name" value="ELONGATION FACTOR TS"/>
    <property type="match status" value="1"/>
</dbReference>
<dbReference type="PANTHER" id="PTHR11741:SF0">
    <property type="entry name" value="ELONGATION FACTOR TS, MITOCHONDRIAL"/>
    <property type="match status" value="1"/>
</dbReference>
<dbReference type="Pfam" id="PF00889">
    <property type="entry name" value="EF_TS"/>
    <property type="match status" value="1"/>
</dbReference>
<dbReference type="SUPFAM" id="SSF54713">
    <property type="entry name" value="Elongation factor Ts (EF-Ts), dimerisation domain"/>
    <property type="match status" value="2"/>
</dbReference>
<dbReference type="SUPFAM" id="SSF46934">
    <property type="entry name" value="UBA-like"/>
    <property type="match status" value="1"/>
</dbReference>
<dbReference type="PROSITE" id="PS01126">
    <property type="entry name" value="EF_TS_1"/>
    <property type="match status" value="1"/>
</dbReference>
<dbReference type="PROSITE" id="PS01127">
    <property type="entry name" value="EF_TS_2"/>
    <property type="match status" value="1"/>
</dbReference>
<name>EFTS_MYCLE</name>
<accession>O33039</accession>
<reference key="1">
    <citation type="journal article" date="2001" name="Nature">
        <title>Massive gene decay in the leprosy bacillus.</title>
        <authorList>
            <person name="Cole S.T."/>
            <person name="Eiglmeier K."/>
            <person name="Parkhill J."/>
            <person name="James K.D."/>
            <person name="Thomson N.R."/>
            <person name="Wheeler P.R."/>
            <person name="Honore N."/>
            <person name="Garnier T."/>
            <person name="Churcher C.M."/>
            <person name="Harris D.E."/>
            <person name="Mungall K.L."/>
            <person name="Basham D."/>
            <person name="Brown D."/>
            <person name="Chillingworth T."/>
            <person name="Connor R."/>
            <person name="Davies R.M."/>
            <person name="Devlin K."/>
            <person name="Duthoy S."/>
            <person name="Feltwell T."/>
            <person name="Fraser A."/>
            <person name="Hamlin N."/>
            <person name="Holroyd S."/>
            <person name="Hornsby T."/>
            <person name="Jagels K."/>
            <person name="Lacroix C."/>
            <person name="Maclean J."/>
            <person name="Moule S."/>
            <person name="Murphy L.D."/>
            <person name="Oliver K."/>
            <person name="Quail M.A."/>
            <person name="Rajandream M.A."/>
            <person name="Rutherford K.M."/>
            <person name="Rutter S."/>
            <person name="Seeger K."/>
            <person name="Simon S."/>
            <person name="Simmonds M."/>
            <person name="Skelton J."/>
            <person name="Squares R."/>
            <person name="Squares S."/>
            <person name="Stevens K."/>
            <person name="Taylor K."/>
            <person name="Whitehead S."/>
            <person name="Woodward J.R."/>
            <person name="Barrell B.G."/>
        </authorList>
    </citation>
    <scope>NUCLEOTIDE SEQUENCE [LARGE SCALE GENOMIC DNA]</scope>
    <source>
        <strain>TN</strain>
    </source>
</reference>
<protein>
    <recommendedName>
        <fullName>Elongation factor Ts</fullName>
        <shortName>EF-Ts</shortName>
    </recommendedName>
</protein>